<reference key="1">
    <citation type="submission" date="2006-01" db="EMBL/GenBank/DDBJ databases">
        <title>Complete sequence of Anaeromyxobacter dehalogenans 2CP-C.</title>
        <authorList>
            <person name="Copeland A."/>
            <person name="Lucas S."/>
            <person name="Lapidus A."/>
            <person name="Barry K."/>
            <person name="Detter J.C."/>
            <person name="Glavina T."/>
            <person name="Hammon N."/>
            <person name="Israni S."/>
            <person name="Pitluck S."/>
            <person name="Brettin T."/>
            <person name="Bruce D."/>
            <person name="Han C."/>
            <person name="Tapia R."/>
            <person name="Gilna P."/>
            <person name="Kiss H."/>
            <person name="Schmutz J."/>
            <person name="Larimer F."/>
            <person name="Land M."/>
            <person name="Kyrpides N."/>
            <person name="Anderson I."/>
            <person name="Sanford R.A."/>
            <person name="Ritalahti K.M."/>
            <person name="Thomas H.S."/>
            <person name="Kirby J.R."/>
            <person name="Zhulin I.B."/>
            <person name="Loeffler F.E."/>
            <person name="Richardson P."/>
        </authorList>
    </citation>
    <scope>NUCLEOTIDE SEQUENCE [LARGE SCALE GENOMIC DNA]</scope>
    <source>
        <strain>2CP-C</strain>
    </source>
</reference>
<comment type="function">
    <text evidence="1">Catalyzes a salvage reaction resulting in the formation of AMP, that is energically less costly than de novo synthesis.</text>
</comment>
<comment type="catalytic activity">
    <reaction evidence="1">
        <text>AMP + diphosphate = 5-phospho-alpha-D-ribose 1-diphosphate + adenine</text>
        <dbReference type="Rhea" id="RHEA:16609"/>
        <dbReference type="ChEBI" id="CHEBI:16708"/>
        <dbReference type="ChEBI" id="CHEBI:33019"/>
        <dbReference type="ChEBI" id="CHEBI:58017"/>
        <dbReference type="ChEBI" id="CHEBI:456215"/>
        <dbReference type="EC" id="2.4.2.7"/>
    </reaction>
</comment>
<comment type="pathway">
    <text evidence="1">Purine metabolism; AMP biosynthesis via salvage pathway; AMP from adenine: step 1/1.</text>
</comment>
<comment type="subunit">
    <text evidence="1">Homodimer.</text>
</comment>
<comment type="subcellular location">
    <subcellularLocation>
        <location evidence="1">Cytoplasm</location>
    </subcellularLocation>
</comment>
<comment type="similarity">
    <text evidence="1">Belongs to the purine/pyrimidine phosphoribosyltransferase family.</text>
</comment>
<gene>
    <name evidence="1" type="primary">apt</name>
    <name type="ordered locus">Adeh_0751</name>
</gene>
<evidence type="ECO:0000255" key="1">
    <source>
        <dbReference type="HAMAP-Rule" id="MF_00004"/>
    </source>
</evidence>
<proteinExistence type="inferred from homology"/>
<organism>
    <name type="scientific">Anaeromyxobacter dehalogenans (strain 2CP-C)</name>
    <dbReference type="NCBI Taxonomy" id="290397"/>
    <lineage>
        <taxon>Bacteria</taxon>
        <taxon>Pseudomonadati</taxon>
        <taxon>Myxococcota</taxon>
        <taxon>Myxococcia</taxon>
        <taxon>Myxococcales</taxon>
        <taxon>Cystobacterineae</taxon>
        <taxon>Anaeromyxobacteraceae</taxon>
        <taxon>Anaeromyxobacter</taxon>
    </lineage>
</organism>
<feature type="chain" id="PRO_0000321334" description="Adenine phosphoribosyltransferase">
    <location>
        <begin position="1"/>
        <end position="172"/>
    </location>
</feature>
<protein>
    <recommendedName>
        <fullName evidence="1">Adenine phosphoribosyltransferase</fullName>
        <shortName evidence="1">APRT</shortName>
        <ecNumber evidence="1">2.4.2.7</ecNumber>
    </recommendedName>
</protein>
<dbReference type="EC" id="2.4.2.7" evidence="1"/>
<dbReference type="EMBL" id="CP000251">
    <property type="protein sequence ID" value="ABC80526.1"/>
    <property type="molecule type" value="Genomic_DNA"/>
</dbReference>
<dbReference type="RefSeq" id="WP_011419809.1">
    <property type="nucleotide sequence ID" value="NC_007760.1"/>
</dbReference>
<dbReference type="SMR" id="Q2INZ6"/>
<dbReference type="STRING" id="290397.Adeh_0751"/>
<dbReference type="KEGG" id="ade:Adeh_0751"/>
<dbReference type="eggNOG" id="COG0503">
    <property type="taxonomic scope" value="Bacteria"/>
</dbReference>
<dbReference type="HOGENOM" id="CLU_063339_3_0_7"/>
<dbReference type="OrthoDB" id="9803963at2"/>
<dbReference type="UniPathway" id="UPA00588">
    <property type="reaction ID" value="UER00646"/>
</dbReference>
<dbReference type="Proteomes" id="UP000001935">
    <property type="component" value="Chromosome"/>
</dbReference>
<dbReference type="GO" id="GO:0005737">
    <property type="term" value="C:cytoplasm"/>
    <property type="evidence" value="ECO:0007669"/>
    <property type="project" value="UniProtKB-SubCell"/>
</dbReference>
<dbReference type="GO" id="GO:0002055">
    <property type="term" value="F:adenine binding"/>
    <property type="evidence" value="ECO:0007669"/>
    <property type="project" value="TreeGrafter"/>
</dbReference>
<dbReference type="GO" id="GO:0003999">
    <property type="term" value="F:adenine phosphoribosyltransferase activity"/>
    <property type="evidence" value="ECO:0007669"/>
    <property type="project" value="UniProtKB-UniRule"/>
</dbReference>
<dbReference type="GO" id="GO:0016208">
    <property type="term" value="F:AMP binding"/>
    <property type="evidence" value="ECO:0007669"/>
    <property type="project" value="TreeGrafter"/>
</dbReference>
<dbReference type="GO" id="GO:0006168">
    <property type="term" value="P:adenine salvage"/>
    <property type="evidence" value="ECO:0007669"/>
    <property type="project" value="InterPro"/>
</dbReference>
<dbReference type="GO" id="GO:0044209">
    <property type="term" value="P:AMP salvage"/>
    <property type="evidence" value="ECO:0007669"/>
    <property type="project" value="UniProtKB-UniRule"/>
</dbReference>
<dbReference type="GO" id="GO:0006166">
    <property type="term" value="P:purine ribonucleoside salvage"/>
    <property type="evidence" value="ECO:0007669"/>
    <property type="project" value="UniProtKB-KW"/>
</dbReference>
<dbReference type="CDD" id="cd06223">
    <property type="entry name" value="PRTases_typeI"/>
    <property type="match status" value="1"/>
</dbReference>
<dbReference type="FunFam" id="3.40.50.2020:FF:000021">
    <property type="entry name" value="Adenine phosphoribosyltransferase"/>
    <property type="match status" value="1"/>
</dbReference>
<dbReference type="Gene3D" id="3.40.50.2020">
    <property type="match status" value="1"/>
</dbReference>
<dbReference type="HAMAP" id="MF_00004">
    <property type="entry name" value="Aden_phosphoribosyltr"/>
    <property type="match status" value="1"/>
</dbReference>
<dbReference type="InterPro" id="IPR005764">
    <property type="entry name" value="Ade_phspho_trans"/>
</dbReference>
<dbReference type="InterPro" id="IPR000836">
    <property type="entry name" value="PRibTrfase_dom"/>
</dbReference>
<dbReference type="InterPro" id="IPR029057">
    <property type="entry name" value="PRTase-like"/>
</dbReference>
<dbReference type="InterPro" id="IPR050054">
    <property type="entry name" value="UPRTase/APRTase"/>
</dbReference>
<dbReference type="NCBIfam" id="TIGR01090">
    <property type="entry name" value="apt"/>
    <property type="match status" value="1"/>
</dbReference>
<dbReference type="NCBIfam" id="NF002634">
    <property type="entry name" value="PRK02304.1-3"/>
    <property type="match status" value="1"/>
</dbReference>
<dbReference type="NCBIfam" id="NF002636">
    <property type="entry name" value="PRK02304.1-5"/>
    <property type="match status" value="1"/>
</dbReference>
<dbReference type="PANTHER" id="PTHR32315">
    <property type="entry name" value="ADENINE PHOSPHORIBOSYLTRANSFERASE"/>
    <property type="match status" value="1"/>
</dbReference>
<dbReference type="PANTHER" id="PTHR32315:SF3">
    <property type="entry name" value="ADENINE PHOSPHORIBOSYLTRANSFERASE"/>
    <property type="match status" value="1"/>
</dbReference>
<dbReference type="Pfam" id="PF00156">
    <property type="entry name" value="Pribosyltran"/>
    <property type="match status" value="1"/>
</dbReference>
<dbReference type="SUPFAM" id="SSF53271">
    <property type="entry name" value="PRTase-like"/>
    <property type="match status" value="1"/>
</dbReference>
<dbReference type="PROSITE" id="PS00103">
    <property type="entry name" value="PUR_PYR_PR_TRANSFER"/>
    <property type="match status" value="1"/>
</dbReference>
<keyword id="KW-0963">Cytoplasm</keyword>
<keyword id="KW-0328">Glycosyltransferase</keyword>
<keyword id="KW-0660">Purine salvage</keyword>
<keyword id="KW-1185">Reference proteome</keyword>
<keyword id="KW-0808">Transferase</keyword>
<accession>Q2INZ6</accession>
<sequence>MMDAVRARIRDVPDFPKKGIVFKDITPVLSDPHTFREVIDAFVGRWKGERVDKVIGIESRGFIFAAPIAYALGAGFTIVRKPGKLPWETIREVYALEYGEGALELHIDAIGPGDRVLVVDDVLATGGTAGAAGRLVARQGAELLGYSFLAELSFLNGARQLGHAKVHSLLTF</sequence>
<name>APT_ANADE</name>